<gene>
    <name evidence="1" type="primary">RPL10A</name>
    <name evidence="4" type="ORF">OsI_30261</name>
</gene>
<keyword id="KW-1185">Reference proteome</keyword>
<keyword id="KW-0687">Ribonucleoprotein</keyword>
<keyword id="KW-0689">Ribosomal protein</keyword>
<dbReference type="EMBL" id="CM000133">
    <property type="protein sequence ID" value="EEC84031.1"/>
    <property type="molecule type" value="Genomic_DNA"/>
</dbReference>
<dbReference type="SMR" id="B8B9K6"/>
<dbReference type="STRING" id="39946.B8B9K6"/>
<dbReference type="EnsemblPlants" id="BGIOSGA029187-TA">
    <property type="protein sequence ID" value="BGIOSGA029187-PA"/>
    <property type="gene ID" value="BGIOSGA029187"/>
</dbReference>
<dbReference type="EnsemblPlants" id="OsGoSa_08g0024470.01">
    <property type="protein sequence ID" value="OsGoSa_08g0024470.01"/>
    <property type="gene ID" value="OsGoSa_08g0024470"/>
</dbReference>
<dbReference type="EnsemblPlants" id="OsIR64_08g0024900.01">
    <property type="protein sequence ID" value="OsIR64_08g0024900.01"/>
    <property type="gene ID" value="OsIR64_08g0024900"/>
</dbReference>
<dbReference type="EnsemblPlants" id="OsKYG_08g0024670.01">
    <property type="protein sequence ID" value="OsKYG_08g0024670.01"/>
    <property type="gene ID" value="OsKYG_08g0024670"/>
</dbReference>
<dbReference type="EnsemblPlants" id="OsLaMu_08g0024660.01">
    <property type="protein sequence ID" value="OsLaMu_08g0024660.01"/>
    <property type="gene ID" value="OsLaMu_08g0024660"/>
</dbReference>
<dbReference type="EnsemblPlants" id="OsLima_08g0024320.01">
    <property type="protein sequence ID" value="OsLima_08g0024320.01"/>
    <property type="gene ID" value="OsLima_08g0024320"/>
</dbReference>
<dbReference type="EnsemblPlants" id="OsLiXu_08g0025380.01">
    <property type="protein sequence ID" value="OsLiXu_08g0025380.01"/>
    <property type="gene ID" value="OsLiXu_08g0025380"/>
</dbReference>
<dbReference type="EnsemblPlants" id="OsMH63_08G025310_01">
    <property type="protein sequence ID" value="OsMH63_08G025310_01"/>
    <property type="gene ID" value="OsMH63_08G025310"/>
</dbReference>
<dbReference type="EnsemblPlants" id="OsPr106_08g0025120.01">
    <property type="protein sequence ID" value="OsPr106_08g0025120.01"/>
    <property type="gene ID" value="OsPr106_08g0025120"/>
</dbReference>
<dbReference type="EnsemblPlants" id="OsZS97_08G025060_01">
    <property type="protein sequence ID" value="OsZS97_08G025060_01"/>
    <property type="gene ID" value="OsZS97_08G025060"/>
</dbReference>
<dbReference type="Gramene" id="BGIOSGA029187-TA">
    <property type="protein sequence ID" value="BGIOSGA029187-PA"/>
    <property type="gene ID" value="BGIOSGA029187"/>
</dbReference>
<dbReference type="Gramene" id="OsGoSa_08g0024470.01">
    <property type="protein sequence ID" value="OsGoSa_08g0024470.01"/>
    <property type="gene ID" value="OsGoSa_08g0024470"/>
</dbReference>
<dbReference type="Gramene" id="OsIR64_08g0024900.01">
    <property type="protein sequence ID" value="OsIR64_08g0024900.01"/>
    <property type="gene ID" value="OsIR64_08g0024900"/>
</dbReference>
<dbReference type="Gramene" id="OsKYG_08g0024670.01">
    <property type="protein sequence ID" value="OsKYG_08g0024670.01"/>
    <property type="gene ID" value="OsKYG_08g0024670"/>
</dbReference>
<dbReference type="Gramene" id="OsLaMu_08g0024660.01">
    <property type="protein sequence ID" value="OsLaMu_08g0024660.01"/>
    <property type="gene ID" value="OsLaMu_08g0024660"/>
</dbReference>
<dbReference type="Gramene" id="OsLima_08g0024320.01">
    <property type="protein sequence ID" value="OsLima_08g0024320.01"/>
    <property type="gene ID" value="OsLima_08g0024320"/>
</dbReference>
<dbReference type="Gramene" id="OsLiXu_08g0025380.01">
    <property type="protein sequence ID" value="OsLiXu_08g0025380.01"/>
    <property type="gene ID" value="OsLiXu_08g0025380"/>
</dbReference>
<dbReference type="Gramene" id="OsMH63_08G025310_01">
    <property type="protein sequence ID" value="OsMH63_08G025310_01"/>
    <property type="gene ID" value="OsMH63_08G025310"/>
</dbReference>
<dbReference type="Gramene" id="OsPr106_08g0025120.01">
    <property type="protein sequence ID" value="OsPr106_08g0025120.01"/>
    <property type="gene ID" value="OsPr106_08g0025120"/>
</dbReference>
<dbReference type="Gramene" id="OsZS97_08G025060_01">
    <property type="protein sequence ID" value="OsZS97_08G025060_01"/>
    <property type="gene ID" value="OsZS97_08G025060"/>
</dbReference>
<dbReference type="HOGENOM" id="CLU_062853_3_0_1"/>
<dbReference type="OMA" id="NWQNVQT"/>
<dbReference type="OrthoDB" id="10253007at2759"/>
<dbReference type="Proteomes" id="UP000007015">
    <property type="component" value="Chromosome 8"/>
</dbReference>
<dbReference type="GO" id="GO:0015934">
    <property type="term" value="C:large ribosomal subunit"/>
    <property type="evidence" value="ECO:0007669"/>
    <property type="project" value="InterPro"/>
</dbReference>
<dbReference type="GO" id="GO:0003723">
    <property type="term" value="F:RNA binding"/>
    <property type="evidence" value="ECO:0007669"/>
    <property type="project" value="InterPro"/>
</dbReference>
<dbReference type="GO" id="GO:0003735">
    <property type="term" value="F:structural constituent of ribosome"/>
    <property type="evidence" value="ECO:0007669"/>
    <property type="project" value="InterPro"/>
</dbReference>
<dbReference type="GO" id="GO:0006412">
    <property type="term" value="P:translation"/>
    <property type="evidence" value="ECO:0007669"/>
    <property type="project" value="InterPro"/>
</dbReference>
<dbReference type="CDD" id="cd00403">
    <property type="entry name" value="Ribosomal_L1"/>
    <property type="match status" value="1"/>
</dbReference>
<dbReference type="FunFam" id="3.30.190.20:FF:000006">
    <property type="entry name" value="Ribosomal protein"/>
    <property type="match status" value="1"/>
</dbReference>
<dbReference type="FunFam" id="3.40.50.790:FF:000002">
    <property type="entry name" value="Ribosomal protein"/>
    <property type="match status" value="1"/>
</dbReference>
<dbReference type="FunFam" id="3.30.190.20:FF:000009">
    <property type="entry name" value="Ribosomal protein L10a"/>
    <property type="match status" value="1"/>
</dbReference>
<dbReference type="Gene3D" id="3.30.190.20">
    <property type="match status" value="1"/>
</dbReference>
<dbReference type="Gene3D" id="3.40.50.790">
    <property type="match status" value="1"/>
</dbReference>
<dbReference type="InterPro" id="IPR050257">
    <property type="entry name" value="eL8/uL1-like"/>
</dbReference>
<dbReference type="InterPro" id="IPR002143">
    <property type="entry name" value="Ribosomal_uL1"/>
</dbReference>
<dbReference type="InterPro" id="IPR023674">
    <property type="entry name" value="Ribosomal_uL1-like"/>
</dbReference>
<dbReference type="InterPro" id="IPR028364">
    <property type="entry name" value="Ribosomal_uL1/biogenesis"/>
</dbReference>
<dbReference type="InterPro" id="IPR016095">
    <property type="entry name" value="Ribosomal_uL1_3-a/b-sand"/>
</dbReference>
<dbReference type="InterPro" id="IPR023673">
    <property type="entry name" value="Ribosomal_uL1_CS"/>
</dbReference>
<dbReference type="PANTHER" id="PTHR23105">
    <property type="entry name" value="RIBOSOMAL PROTEIN L7AE FAMILY MEMBER"/>
    <property type="match status" value="1"/>
</dbReference>
<dbReference type="Pfam" id="PF00687">
    <property type="entry name" value="Ribosomal_L1"/>
    <property type="match status" value="1"/>
</dbReference>
<dbReference type="PIRSF" id="PIRSF002155">
    <property type="entry name" value="Ribosomal_L1"/>
    <property type="match status" value="1"/>
</dbReference>
<dbReference type="SUPFAM" id="SSF56808">
    <property type="entry name" value="Ribosomal protein L1"/>
    <property type="match status" value="1"/>
</dbReference>
<dbReference type="PROSITE" id="PS01199">
    <property type="entry name" value="RIBOSOMAL_L1"/>
    <property type="match status" value="1"/>
</dbReference>
<evidence type="ECO:0000250" key="1">
    <source>
        <dbReference type="UniProtKB" id="B7F845"/>
    </source>
</evidence>
<evidence type="ECO:0000255" key="2">
    <source>
        <dbReference type="RuleBase" id="RU000659"/>
    </source>
</evidence>
<evidence type="ECO:0000305" key="3"/>
<evidence type="ECO:0000312" key="4">
    <source>
        <dbReference type="EMBL" id="EEC84031.1"/>
    </source>
</evidence>
<evidence type="ECO:0000312" key="5">
    <source>
        <dbReference type="Proteomes" id="UP000007015"/>
    </source>
</evidence>
<comment type="similarity">
    <text evidence="2">Belongs to the universal ribosomal protein uL1 family.</text>
</comment>
<proteinExistence type="inferred from homology"/>
<name>R10A_ORYSI</name>
<feature type="chain" id="PRO_0000432562" description="Large ribosomal subunit protein uL1">
    <location>
        <begin position="1"/>
        <end position="216"/>
    </location>
</feature>
<sequence>MSKLQSEVLKEAISQVVGESKEKGRKFTETVELQIGLKNYDPQKDKRFSGSVKLPHIPRPKMKVCMLGDAQHVEEAEKIGLDYMDVEALKKMNKNKKLVKKLAKKYHAFLASEAIIKQIPRLLGPGLNKAGKFPTLVTHQESLESKVNETKATVKFQLKKVLCMGVAVGNLSMEEKQIQQNIQMSVNFLVSLLKKNWQNVRCLYIKSTMGKPIRVF</sequence>
<accession>B8B9K6</accession>
<protein>
    <recommendedName>
        <fullName evidence="3">Large ribosomal subunit protein uL1</fullName>
    </recommendedName>
    <alternativeName>
        <fullName evidence="1">60S ribosomal protein L10a</fullName>
    </alternativeName>
</protein>
<reference key="1">
    <citation type="journal article" date="2005" name="PLoS Biol.">
        <title>The genomes of Oryza sativa: a history of duplications.</title>
        <authorList>
            <person name="Yu J."/>
            <person name="Wang J."/>
            <person name="Lin W."/>
            <person name="Li S."/>
            <person name="Li H."/>
            <person name="Zhou J."/>
            <person name="Ni P."/>
            <person name="Dong W."/>
            <person name="Hu S."/>
            <person name="Zeng C."/>
            <person name="Zhang J."/>
            <person name="Zhang Y."/>
            <person name="Li R."/>
            <person name="Xu Z."/>
            <person name="Li S."/>
            <person name="Li X."/>
            <person name="Zheng H."/>
            <person name="Cong L."/>
            <person name="Lin L."/>
            <person name="Yin J."/>
            <person name="Geng J."/>
            <person name="Li G."/>
            <person name="Shi J."/>
            <person name="Liu J."/>
            <person name="Lv H."/>
            <person name="Li J."/>
            <person name="Wang J."/>
            <person name="Deng Y."/>
            <person name="Ran L."/>
            <person name="Shi X."/>
            <person name="Wang X."/>
            <person name="Wu Q."/>
            <person name="Li C."/>
            <person name="Ren X."/>
            <person name="Wang J."/>
            <person name="Wang X."/>
            <person name="Li D."/>
            <person name="Liu D."/>
            <person name="Zhang X."/>
            <person name="Ji Z."/>
            <person name="Zhao W."/>
            <person name="Sun Y."/>
            <person name="Zhang Z."/>
            <person name="Bao J."/>
            <person name="Han Y."/>
            <person name="Dong L."/>
            <person name="Ji J."/>
            <person name="Chen P."/>
            <person name="Wu S."/>
            <person name="Liu J."/>
            <person name="Xiao Y."/>
            <person name="Bu D."/>
            <person name="Tan J."/>
            <person name="Yang L."/>
            <person name="Ye C."/>
            <person name="Zhang J."/>
            <person name="Xu J."/>
            <person name="Zhou Y."/>
            <person name="Yu Y."/>
            <person name="Zhang B."/>
            <person name="Zhuang S."/>
            <person name="Wei H."/>
            <person name="Liu B."/>
            <person name="Lei M."/>
            <person name="Yu H."/>
            <person name="Li Y."/>
            <person name="Xu H."/>
            <person name="Wei S."/>
            <person name="He X."/>
            <person name="Fang L."/>
            <person name="Zhang Z."/>
            <person name="Zhang Y."/>
            <person name="Huang X."/>
            <person name="Su Z."/>
            <person name="Tong W."/>
            <person name="Li J."/>
            <person name="Tong Z."/>
            <person name="Li S."/>
            <person name="Ye J."/>
            <person name="Wang L."/>
            <person name="Fang L."/>
            <person name="Lei T."/>
            <person name="Chen C.-S."/>
            <person name="Chen H.-C."/>
            <person name="Xu Z."/>
            <person name="Li H."/>
            <person name="Huang H."/>
            <person name="Zhang F."/>
            <person name="Xu H."/>
            <person name="Li N."/>
            <person name="Zhao C."/>
            <person name="Li S."/>
            <person name="Dong L."/>
            <person name="Huang Y."/>
            <person name="Li L."/>
            <person name="Xi Y."/>
            <person name="Qi Q."/>
            <person name="Li W."/>
            <person name="Zhang B."/>
            <person name="Hu W."/>
            <person name="Zhang Y."/>
            <person name="Tian X."/>
            <person name="Jiao Y."/>
            <person name="Liang X."/>
            <person name="Jin J."/>
            <person name="Gao L."/>
            <person name="Zheng W."/>
            <person name="Hao B."/>
            <person name="Liu S.-M."/>
            <person name="Wang W."/>
            <person name="Yuan L."/>
            <person name="Cao M."/>
            <person name="McDermott J."/>
            <person name="Samudrala R."/>
            <person name="Wang J."/>
            <person name="Wong G.K.-S."/>
            <person name="Yang H."/>
        </authorList>
    </citation>
    <scope>NUCLEOTIDE SEQUENCE [LARGE SCALE GENOMIC DNA]</scope>
    <source>
        <strain>cv. 93-11</strain>
    </source>
</reference>
<organism evidence="5">
    <name type="scientific">Oryza sativa subsp. indica</name>
    <name type="common">Rice</name>
    <dbReference type="NCBI Taxonomy" id="39946"/>
    <lineage>
        <taxon>Eukaryota</taxon>
        <taxon>Viridiplantae</taxon>
        <taxon>Streptophyta</taxon>
        <taxon>Embryophyta</taxon>
        <taxon>Tracheophyta</taxon>
        <taxon>Spermatophyta</taxon>
        <taxon>Magnoliopsida</taxon>
        <taxon>Liliopsida</taxon>
        <taxon>Poales</taxon>
        <taxon>Poaceae</taxon>
        <taxon>BOP clade</taxon>
        <taxon>Oryzoideae</taxon>
        <taxon>Oryzeae</taxon>
        <taxon>Oryzinae</taxon>
        <taxon>Oryza</taxon>
        <taxon>Oryza sativa</taxon>
    </lineage>
</organism>